<name>CISY2_RHITR</name>
<keyword id="KW-0614">Plasmid</keyword>
<keyword id="KW-0808">Transferase</keyword>
<keyword id="KW-0816">Tricarboxylic acid cycle</keyword>
<sequence>MDNNNACVLVDGHSAELKLRSSTIGPNVLGIGSLYEQTKMFTYDPGFTSTASCESSITFIDGDEGVLLHRGYPIEQLAEHGDFLEVCYLLLYGELPTAAQKKDFDYRVVHHTMVHEQMSRFFTGFRRDAHPMAVMCGCVGALSAFYHDSTDITDPHQRMVASLRMIAKMPTLAAMAYKYHIGQPFVYPKNDLDYASNFLRMCFAVPCEEYVVNPVLARAMDRIFILHADHEQNASTSTVRLAGSSGANPFACIAAGIACLWGPAHGGANERALNMLTEIGTVDRIPEYIARAKDKNDPFRLMGFGHRVYKNYDPRAKIMQKTAHEVLGELGIKDDPLLDIAIELERIALTDDYFIEKKLYPNVDFYSGITLKALGFPTTMFTVLFALARTVGWIAQWNEMIEDPDQRIGRPRQLYTGAPLREYVPLSKR</sequence>
<comment type="function">
    <text>The exact function of the plasmid-encoded citrate synthase is not clear, it could help nodulation by allowing the bacteria to use citrate as a chelator of iron and calcium.</text>
</comment>
<comment type="catalytic activity">
    <reaction evidence="1">
        <text>oxaloacetate + acetyl-CoA + H2O = citrate + CoA + H(+)</text>
        <dbReference type="Rhea" id="RHEA:16845"/>
        <dbReference type="ChEBI" id="CHEBI:15377"/>
        <dbReference type="ChEBI" id="CHEBI:15378"/>
        <dbReference type="ChEBI" id="CHEBI:16452"/>
        <dbReference type="ChEBI" id="CHEBI:16947"/>
        <dbReference type="ChEBI" id="CHEBI:57287"/>
        <dbReference type="ChEBI" id="CHEBI:57288"/>
        <dbReference type="EC" id="2.3.3.16"/>
    </reaction>
</comment>
<comment type="pathway">
    <text>Carbohydrate metabolism; tricarboxylic acid cycle; isocitrate from oxaloacetate: step 1/2.</text>
</comment>
<comment type="similarity">
    <text evidence="2">Belongs to the citrate synthase family.</text>
</comment>
<proteinExistence type="inferred from homology"/>
<evidence type="ECO:0000255" key="1">
    <source>
        <dbReference type="PROSITE-ProRule" id="PRU10117"/>
    </source>
</evidence>
<evidence type="ECO:0000305" key="2"/>
<gene>
    <name type="primary">pcsA</name>
</gene>
<geneLocation type="plasmid">
    <name>sym</name>
</geneLocation>
<feature type="chain" id="PRO_0000169955" description="Citrate synthase, plasmid">
    <location>
        <begin position="1"/>
        <end position="429"/>
    </location>
</feature>
<feature type="active site" evidence="1">
    <location>
        <position position="306"/>
    </location>
</feature>
<feature type="active site" evidence="1">
    <location>
        <position position="364"/>
    </location>
</feature>
<organism>
    <name type="scientific">Rhizobium tropici</name>
    <dbReference type="NCBI Taxonomy" id="398"/>
    <lineage>
        <taxon>Bacteria</taxon>
        <taxon>Pseudomonadati</taxon>
        <taxon>Pseudomonadota</taxon>
        <taxon>Alphaproteobacteria</taxon>
        <taxon>Hyphomicrobiales</taxon>
        <taxon>Rhizobiaceae</taxon>
        <taxon>Rhizobium/Agrobacterium group</taxon>
        <taxon>Rhizobium</taxon>
    </lineage>
</organism>
<protein>
    <recommendedName>
        <fullName>Citrate synthase, plasmid</fullName>
        <ecNumber>2.3.3.16</ecNumber>
    </recommendedName>
</protein>
<reference key="1">
    <citation type="journal article" date="1994" name="Mol. Microbiol.">
        <title>Nodulating ability of Rhizobium tropici is conditioned by a plasmid-encoded citrate synthase.</title>
        <authorList>
            <person name="Pardo M.A."/>
            <person name="Lagunez J."/>
            <person name="Miranda J."/>
            <person name="Martinez E."/>
        </authorList>
    </citation>
    <scope>NUCLEOTIDE SEQUENCE [GENOMIC DNA]</scope>
    <source>
        <strain>CFN 299</strain>
    </source>
</reference>
<dbReference type="EC" id="2.3.3.16"/>
<dbReference type="EMBL" id="Z34516">
    <property type="protein sequence ID" value="CAA84274.1"/>
    <property type="molecule type" value="Genomic_DNA"/>
</dbReference>
<dbReference type="PIR" id="S41527">
    <property type="entry name" value="S41527"/>
</dbReference>
<dbReference type="SMR" id="P51038"/>
<dbReference type="UniPathway" id="UPA00223">
    <property type="reaction ID" value="UER00717"/>
</dbReference>
<dbReference type="GO" id="GO:0005737">
    <property type="term" value="C:cytoplasm"/>
    <property type="evidence" value="ECO:0007669"/>
    <property type="project" value="InterPro"/>
</dbReference>
<dbReference type="GO" id="GO:0004108">
    <property type="term" value="F:citrate (Si)-synthase activity"/>
    <property type="evidence" value="ECO:0007669"/>
    <property type="project" value="InterPro"/>
</dbReference>
<dbReference type="GO" id="GO:0006099">
    <property type="term" value="P:tricarboxylic acid cycle"/>
    <property type="evidence" value="ECO:0007669"/>
    <property type="project" value="UniProtKB-UniPathway"/>
</dbReference>
<dbReference type="CDD" id="cd06114">
    <property type="entry name" value="EcCS_like"/>
    <property type="match status" value="1"/>
</dbReference>
<dbReference type="FunFam" id="1.10.230.10:FF:000002">
    <property type="entry name" value="Citrate synthase"/>
    <property type="match status" value="1"/>
</dbReference>
<dbReference type="Gene3D" id="2.20.28.60">
    <property type="match status" value="1"/>
</dbReference>
<dbReference type="Gene3D" id="1.10.580.10">
    <property type="entry name" value="Citrate Synthase, domain 1"/>
    <property type="match status" value="1"/>
</dbReference>
<dbReference type="Gene3D" id="1.10.230.10">
    <property type="entry name" value="Cytochrome P450-Terp, domain 2"/>
    <property type="match status" value="1"/>
</dbReference>
<dbReference type="InterPro" id="IPR016142">
    <property type="entry name" value="Citrate_synth-like_lrg_a-sub"/>
</dbReference>
<dbReference type="InterPro" id="IPR016143">
    <property type="entry name" value="Citrate_synth-like_sm_a-sub"/>
</dbReference>
<dbReference type="InterPro" id="IPR002020">
    <property type="entry name" value="Citrate_synthase"/>
</dbReference>
<dbReference type="InterPro" id="IPR019810">
    <property type="entry name" value="Citrate_synthase_AS"/>
</dbReference>
<dbReference type="InterPro" id="IPR024176">
    <property type="entry name" value="Citrate_synthase_bac-typ"/>
</dbReference>
<dbReference type="InterPro" id="IPR036969">
    <property type="entry name" value="Citrate_synthase_sf"/>
</dbReference>
<dbReference type="InterPro" id="IPR010953">
    <property type="entry name" value="Citrate_synthase_typ-I"/>
</dbReference>
<dbReference type="NCBIfam" id="TIGR01798">
    <property type="entry name" value="cit_synth_I"/>
    <property type="match status" value="1"/>
</dbReference>
<dbReference type="NCBIfam" id="NF004126">
    <property type="entry name" value="PRK05614.1"/>
    <property type="match status" value="1"/>
</dbReference>
<dbReference type="PANTHER" id="PTHR42871">
    <property type="entry name" value="CITRATE SYNTHASE"/>
    <property type="match status" value="1"/>
</dbReference>
<dbReference type="PANTHER" id="PTHR42871:SF1">
    <property type="entry name" value="CITRATE SYNTHASE"/>
    <property type="match status" value="1"/>
</dbReference>
<dbReference type="Pfam" id="PF00285">
    <property type="entry name" value="Citrate_synt"/>
    <property type="match status" value="1"/>
</dbReference>
<dbReference type="PIRSF" id="PIRSF001369">
    <property type="entry name" value="Citrate_synth"/>
    <property type="match status" value="1"/>
</dbReference>
<dbReference type="PRINTS" id="PR00143">
    <property type="entry name" value="CITRTSNTHASE"/>
</dbReference>
<dbReference type="SUPFAM" id="SSF48256">
    <property type="entry name" value="Citrate synthase"/>
    <property type="match status" value="1"/>
</dbReference>
<dbReference type="PROSITE" id="PS00480">
    <property type="entry name" value="CITRATE_SYNTHASE"/>
    <property type="match status" value="1"/>
</dbReference>
<accession>P51038</accession>